<gene>
    <name type="primary">exoX</name>
    <name type="synonym">yobC</name>
    <name type="ordered locus">b1844</name>
    <name type="ordered locus">JW1833</name>
</gene>
<name>EXOX_ECOLI</name>
<proteinExistence type="evidence at protein level"/>
<feature type="chain" id="PRO_0000087136" description="Exodeoxyribonuclease 10">
    <location>
        <begin position="1"/>
        <end position="220"/>
    </location>
</feature>
<feature type="strand" evidence="1">
    <location>
        <begin position="2"/>
        <end position="11"/>
    </location>
</feature>
<feature type="strand" evidence="1">
    <location>
        <begin position="16"/>
        <end position="25"/>
    </location>
</feature>
<feature type="strand" evidence="1">
    <location>
        <begin position="28"/>
        <end position="36"/>
    </location>
</feature>
<feature type="helix" evidence="1">
    <location>
        <begin position="45"/>
        <end position="51"/>
    </location>
</feature>
<feature type="helix" evidence="1">
    <location>
        <begin position="55"/>
        <end position="58"/>
    </location>
</feature>
<feature type="helix" evidence="1">
    <location>
        <begin position="64"/>
        <end position="67"/>
    </location>
</feature>
<feature type="helix" evidence="1">
    <location>
        <begin position="68"/>
        <end position="71"/>
    </location>
</feature>
<feature type="strand" evidence="1">
    <location>
        <begin position="75"/>
        <end position="81"/>
    </location>
</feature>
<feature type="helix" evidence="1">
    <location>
        <begin position="82"/>
        <end position="88"/>
    </location>
</feature>
<feature type="strand" evidence="1">
    <location>
        <begin position="93"/>
        <end position="98"/>
    </location>
</feature>
<feature type="helix" evidence="1">
    <location>
        <begin position="99"/>
        <end position="106"/>
    </location>
</feature>
<feature type="helix" evidence="1">
    <location>
        <begin position="114"/>
        <end position="120"/>
    </location>
</feature>
<feature type="helix" evidence="1">
    <location>
        <begin position="136"/>
        <end position="154"/>
    </location>
</feature>
<feature type="helix" evidence="1">
    <location>
        <begin position="158"/>
        <end position="165"/>
    </location>
</feature>
<dbReference type="EC" id="3.1.11.-"/>
<dbReference type="EMBL" id="AF194116">
    <property type="protein sequence ID" value="AAF04847.1"/>
    <property type="molecule type" value="Genomic_DNA"/>
</dbReference>
<dbReference type="EMBL" id="U00096">
    <property type="protein sequence ID" value="AAC74914.1"/>
    <property type="molecule type" value="Genomic_DNA"/>
</dbReference>
<dbReference type="EMBL" id="AP009048">
    <property type="protein sequence ID" value="BAE76547.1"/>
    <property type="molecule type" value="Genomic_DNA"/>
</dbReference>
<dbReference type="PIR" id="D64946">
    <property type="entry name" value="D64946"/>
</dbReference>
<dbReference type="RefSeq" id="NP_416358.1">
    <property type="nucleotide sequence ID" value="NC_000913.3"/>
</dbReference>
<dbReference type="RefSeq" id="WP_000944256.1">
    <property type="nucleotide sequence ID" value="NZ_STEB01000009.1"/>
</dbReference>
<dbReference type="PDB" id="4FZX">
    <property type="method" value="X-ray"/>
    <property type="resolution" value="2.30 A"/>
    <property type="chains" value="C/D=1-167"/>
</dbReference>
<dbReference type="PDB" id="4FZY">
    <property type="method" value="X-ray"/>
    <property type="resolution" value="2.50 A"/>
    <property type="chains" value="A/B=1-167"/>
</dbReference>
<dbReference type="PDB" id="4FZZ">
    <property type="method" value="X-ray"/>
    <property type="resolution" value="2.80 A"/>
    <property type="chains" value="A/B=1-167"/>
</dbReference>
<dbReference type="PDBsum" id="4FZX"/>
<dbReference type="PDBsum" id="4FZY"/>
<dbReference type="PDBsum" id="4FZZ"/>
<dbReference type="SMR" id="P0AEK0"/>
<dbReference type="BioGRID" id="4260363">
    <property type="interactions" value="106"/>
</dbReference>
<dbReference type="FunCoup" id="P0AEK0">
    <property type="interactions" value="29"/>
</dbReference>
<dbReference type="STRING" id="511145.b1844"/>
<dbReference type="jPOST" id="P0AEK0"/>
<dbReference type="PaxDb" id="511145-b1844"/>
<dbReference type="EnsemblBacteria" id="AAC74914">
    <property type="protein sequence ID" value="AAC74914"/>
    <property type="gene ID" value="b1844"/>
</dbReference>
<dbReference type="GeneID" id="93776111"/>
<dbReference type="GeneID" id="946361"/>
<dbReference type="KEGG" id="ecj:JW1833"/>
<dbReference type="KEGG" id="eco:b1844"/>
<dbReference type="KEGG" id="ecoc:C3026_10505"/>
<dbReference type="PATRIC" id="fig|511145.12.peg.1922"/>
<dbReference type="EchoBASE" id="EB3785"/>
<dbReference type="eggNOG" id="COG0847">
    <property type="taxonomic scope" value="Bacteria"/>
</dbReference>
<dbReference type="HOGENOM" id="CLU_047806_8_2_6"/>
<dbReference type="InParanoid" id="P0AEK0"/>
<dbReference type="OMA" id="SPYYVAH"/>
<dbReference type="OrthoDB" id="7822240at2"/>
<dbReference type="PhylomeDB" id="P0AEK0"/>
<dbReference type="BioCyc" id="EcoCyc:G7016-MONOMER"/>
<dbReference type="PRO" id="PR:P0AEK0"/>
<dbReference type="Proteomes" id="UP000000625">
    <property type="component" value="Chromosome"/>
</dbReference>
<dbReference type="GO" id="GO:0005829">
    <property type="term" value="C:cytosol"/>
    <property type="evidence" value="ECO:0000318"/>
    <property type="project" value="GO_Central"/>
</dbReference>
<dbReference type="GO" id="GO:0008408">
    <property type="term" value="F:3'-5' exonuclease activity"/>
    <property type="evidence" value="ECO:0000314"/>
    <property type="project" value="EcoCyc"/>
</dbReference>
<dbReference type="GO" id="GO:0003676">
    <property type="term" value="F:nucleic acid binding"/>
    <property type="evidence" value="ECO:0007669"/>
    <property type="project" value="InterPro"/>
</dbReference>
<dbReference type="GO" id="GO:0045004">
    <property type="term" value="P:DNA replication proofreading"/>
    <property type="evidence" value="ECO:0000318"/>
    <property type="project" value="GO_Central"/>
</dbReference>
<dbReference type="GO" id="GO:0006298">
    <property type="term" value="P:mismatch repair"/>
    <property type="evidence" value="ECO:0000314"/>
    <property type="project" value="EcoCyc"/>
</dbReference>
<dbReference type="CDD" id="cd06127">
    <property type="entry name" value="DEDDh"/>
    <property type="match status" value="1"/>
</dbReference>
<dbReference type="FunFam" id="3.30.420.10:FF:000020">
    <property type="entry name" value="Exodeoxyribonuclease X"/>
    <property type="match status" value="1"/>
</dbReference>
<dbReference type="Gene3D" id="3.30.420.10">
    <property type="entry name" value="Ribonuclease H-like superfamily/Ribonuclease H"/>
    <property type="match status" value="1"/>
</dbReference>
<dbReference type="InterPro" id="IPR013520">
    <property type="entry name" value="Exonuclease_RNaseT/DNA_pol3"/>
</dbReference>
<dbReference type="InterPro" id="IPR046768">
    <property type="entry name" value="ExoX-like_C"/>
</dbReference>
<dbReference type="InterPro" id="IPR012337">
    <property type="entry name" value="RNaseH-like_sf"/>
</dbReference>
<dbReference type="InterPro" id="IPR036397">
    <property type="entry name" value="RNaseH_sf"/>
</dbReference>
<dbReference type="NCBIfam" id="NF005937">
    <property type="entry name" value="PRK07983.1"/>
    <property type="match status" value="1"/>
</dbReference>
<dbReference type="PANTHER" id="PTHR30231">
    <property type="entry name" value="DNA POLYMERASE III SUBUNIT EPSILON"/>
    <property type="match status" value="1"/>
</dbReference>
<dbReference type="PANTHER" id="PTHR30231:SF37">
    <property type="entry name" value="EXODEOXYRIBONUCLEASE 10"/>
    <property type="match status" value="1"/>
</dbReference>
<dbReference type="Pfam" id="PF20600">
    <property type="entry name" value="ExoX-like_C"/>
    <property type="match status" value="1"/>
</dbReference>
<dbReference type="Pfam" id="PF00929">
    <property type="entry name" value="RNase_T"/>
    <property type="match status" value="1"/>
</dbReference>
<dbReference type="SMART" id="SM00479">
    <property type="entry name" value="EXOIII"/>
    <property type="match status" value="1"/>
</dbReference>
<dbReference type="SUPFAM" id="SSF53098">
    <property type="entry name" value="Ribonuclease H-like"/>
    <property type="match status" value="1"/>
</dbReference>
<protein>
    <recommendedName>
        <fullName>Exodeoxyribonuclease 10</fullName>
        <ecNumber>3.1.11.-</ecNumber>
    </recommendedName>
    <alternativeName>
        <fullName>Exodeoxyribonuclease X</fullName>
        <shortName>Exo X</shortName>
        <shortName>Exonuclease X</shortName>
    </alternativeName>
</protein>
<organism>
    <name type="scientific">Escherichia coli (strain K12)</name>
    <dbReference type="NCBI Taxonomy" id="83333"/>
    <lineage>
        <taxon>Bacteria</taxon>
        <taxon>Pseudomonadati</taxon>
        <taxon>Pseudomonadota</taxon>
        <taxon>Gammaproteobacteria</taxon>
        <taxon>Enterobacterales</taxon>
        <taxon>Enterobacteriaceae</taxon>
        <taxon>Escherichia</taxon>
    </lineage>
</organism>
<accession>P0AEK0</accession>
<accession>P76281</accession>
<accession>Q2MB09</accession>
<reference key="1">
    <citation type="journal article" date="1999" name="J. Biol. Chem.">
        <title>Exonuclease X of Escherichia coli. A novel 3'-5' DNase and DnaQ superfamily member involved in DNA repair.</title>
        <authorList>
            <person name="Viswanathan M."/>
            <person name="Lovett S.T."/>
        </authorList>
    </citation>
    <scope>NUCLEOTIDE SEQUENCE [GENOMIC DNA]</scope>
    <scope>CHARACTERIZATION</scope>
</reference>
<reference key="2">
    <citation type="journal article" date="1997" name="Science">
        <title>The complete genome sequence of Escherichia coli K-12.</title>
        <authorList>
            <person name="Blattner F.R."/>
            <person name="Plunkett G. III"/>
            <person name="Bloch C.A."/>
            <person name="Perna N.T."/>
            <person name="Burland V."/>
            <person name="Riley M."/>
            <person name="Collado-Vides J."/>
            <person name="Glasner J.D."/>
            <person name="Rode C.K."/>
            <person name="Mayhew G.F."/>
            <person name="Gregor J."/>
            <person name="Davis N.W."/>
            <person name="Kirkpatrick H.A."/>
            <person name="Goeden M.A."/>
            <person name="Rose D.J."/>
            <person name="Mau B."/>
            <person name="Shao Y."/>
        </authorList>
    </citation>
    <scope>NUCLEOTIDE SEQUENCE [LARGE SCALE GENOMIC DNA]</scope>
    <source>
        <strain>K12 / MG1655 / ATCC 47076</strain>
    </source>
</reference>
<reference key="3">
    <citation type="journal article" date="2006" name="Mol. Syst. Biol.">
        <title>Highly accurate genome sequences of Escherichia coli K-12 strains MG1655 and W3110.</title>
        <authorList>
            <person name="Hayashi K."/>
            <person name="Morooka N."/>
            <person name="Yamamoto Y."/>
            <person name="Fujita K."/>
            <person name="Isono K."/>
            <person name="Choi S."/>
            <person name="Ohtsubo E."/>
            <person name="Baba T."/>
            <person name="Wanner B.L."/>
            <person name="Mori H."/>
            <person name="Horiuchi T."/>
        </authorList>
    </citation>
    <scope>NUCLEOTIDE SEQUENCE [LARGE SCALE GENOMIC DNA]</scope>
    <source>
        <strain>K12 / W3110 / ATCC 27325 / DSM 5911</strain>
    </source>
</reference>
<keyword id="KW-0002">3D-structure</keyword>
<keyword id="KW-0227">DNA damage</keyword>
<keyword id="KW-0234">DNA repair</keyword>
<keyword id="KW-0269">Exonuclease</keyword>
<keyword id="KW-0378">Hydrolase</keyword>
<keyword id="KW-0460">Magnesium</keyword>
<keyword id="KW-0540">Nuclease</keyword>
<keyword id="KW-1185">Reference proteome</keyword>
<comment type="function">
    <text>Capable of degrading both single-strand and double-strand DNA with 3' to 5' polarity. Has higher affinity for ssDNA ends than for dsDNA.</text>
</comment>
<comment type="cofactor">
    <cofactor>
        <name>Mg(2+)</name>
        <dbReference type="ChEBI" id="CHEBI:18420"/>
    </cofactor>
</comment>
<evidence type="ECO:0007829" key="1">
    <source>
        <dbReference type="PDB" id="4FZX"/>
    </source>
</evidence>
<sequence>MLRIIDTETCGLQGGIVEIASVDVIDGKIVNPMSHLVRPDRPISPQAMAIHRITEAMVADKPWIEDVIPHYYGSEWYVAHNASFDRRVLPEMPGEWICTMKLARRLWPGIKYSNMALYKTRKLNVQTPPGLHHHRALYDCYITAALLIDIMNTSGWTAEQMADITGRPSLMTTFTFGKYRGKAVSDVAERDPGYLRWLFNNLDSMSPELRLTLKHYLENT</sequence>